<protein>
    <recommendedName>
        <fullName>Capsid protein VP1</fullName>
    </recommendedName>
</protein>
<name>CAPSD_AAV2S</name>
<feature type="chain" id="PRO_0000222455" description="Capsid protein VP1">
    <location>
        <begin position="1"/>
        <end position="735"/>
    </location>
</feature>
<feature type="region of interest" description="Disordered" evidence="2">
    <location>
        <begin position="22"/>
        <end position="44"/>
    </location>
</feature>
<feature type="region of interest" description="Phospholipase A2-like" evidence="1">
    <location>
        <begin position="52"/>
        <end position="97"/>
    </location>
</feature>
<feature type="region of interest" description="Disordered" evidence="2">
    <location>
        <begin position="136"/>
        <end position="224"/>
    </location>
</feature>
<feature type="compositionally biased region" description="Basic and acidic residues" evidence="2">
    <location>
        <begin position="34"/>
        <end position="43"/>
    </location>
</feature>
<feature type="compositionally biased region" description="Pro residues" evidence="2">
    <location>
        <begin position="184"/>
        <end position="194"/>
    </location>
</feature>
<feature type="splice variant" id="VSP_040828" description="In isoform VP3." evidence="9">
    <location>
        <begin position="1"/>
        <end position="202"/>
    </location>
</feature>
<feature type="splice variant" id="VSP_040829" description="In isoform VP2." evidence="9">
    <location>
        <begin position="1"/>
        <end position="137"/>
    </location>
</feature>
<feature type="splice variant" id="VSP_040830" description="In isoform VP2." evidence="9">
    <original>T</original>
    <variation>M</variation>
    <location>
        <position position="138"/>
    </location>
</feature>
<feature type="sequence conflict" description="In Ref. 3; AAA42376." evidence="9" ref="3">
    <location>
        <begin position="520"/>
        <end position="521"/>
    </location>
</feature>
<feature type="sequence conflict" description="In Ref. 3; AAA42376." evidence="9" ref="3">
    <original>D</original>
    <variation>N</variation>
    <location>
        <position position="553"/>
    </location>
</feature>
<feature type="sequence conflict" description="In Ref. 3; AAA42376." evidence="9" ref="3">
    <original>R</original>
    <variation>G</variation>
    <location>
        <position position="566"/>
    </location>
</feature>
<feature type="strand" evidence="11">
    <location>
        <begin position="221"/>
        <end position="223"/>
    </location>
</feature>
<feature type="strand" evidence="12">
    <location>
        <begin position="231"/>
        <end position="234"/>
    </location>
</feature>
<feature type="strand" evidence="13">
    <location>
        <begin position="238"/>
        <end position="249"/>
    </location>
</feature>
<feature type="helix" evidence="13">
    <location>
        <begin position="253"/>
        <end position="255"/>
    </location>
</feature>
<feature type="strand" evidence="13">
    <location>
        <begin position="258"/>
        <end position="262"/>
    </location>
</feature>
<feature type="strand" evidence="12">
    <location>
        <begin position="264"/>
        <end position="266"/>
    </location>
</feature>
<feature type="helix" evidence="13">
    <location>
        <begin position="268"/>
        <end position="270"/>
    </location>
</feature>
<feature type="strand" evidence="13">
    <location>
        <begin position="273"/>
        <end position="281"/>
    </location>
</feature>
<feature type="helix" evidence="13">
    <location>
        <begin position="287"/>
        <end position="289"/>
    </location>
</feature>
<feature type="helix" evidence="13">
    <location>
        <begin position="293"/>
        <end position="300"/>
    </location>
</feature>
<feature type="strand" evidence="13">
    <location>
        <begin position="303"/>
        <end position="326"/>
    </location>
</feature>
<feature type="strand" evidence="13">
    <location>
        <begin position="329"/>
        <end position="337"/>
    </location>
</feature>
<feature type="strand" evidence="13">
    <location>
        <begin position="340"/>
        <end position="344"/>
    </location>
</feature>
<feature type="strand" evidence="13">
    <location>
        <begin position="369"/>
        <end position="371"/>
    </location>
</feature>
<feature type="strand" evidence="13">
    <location>
        <begin position="374"/>
        <end position="378"/>
    </location>
</feature>
<feature type="helix" evidence="13">
    <location>
        <begin position="395"/>
        <end position="397"/>
    </location>
</feature>
<feature type="strand" evidence="13">
    <location>
        <begin position="401"/>
        <end position="403"/>
    </location>
</feature>
<feature type="strand" evidence="13">
    <location>
        <begin position="409"/>
        <end position="414"/>
    </location>
</feature>
<feature type="strand" evidence="13">
    <location>
        <begin position="425"/>
        <end position="428"/>
    </location>
</feature>
<feature type="helix" evidence="13">
    <location>
        <begin position="430"/>
        <end position="432"/>
    </location>
</feature>
<feature type="strand" evidence="13">
    <location>
        <begin position="436"/>
        <end position="438"/>
    </location>
</feature>
<feature type="strand" evidence="13">
    <location>
        <begin position="441"/>
        <end position="452"/>
    </location>
</feature>
<feature type="strand" evidence="13">
    <location>
        <begin position="455"/>
        <end position="464"/>
    </location>
</feature>
<feature type="turn" evidence="11">
    <location>
        <begin position="467"/>
        <end position="469"/>
    </location>
</feature>
<feature type="helix" evidence="13">
    <location>
        <begin position="470"/>
        <end position="472"/>
    </location>
</feature>
<feature type="strand" evidence="13">
    <location>
        <begin position="487"/>
        <end position="491"/>
    </location>
</feature>
<feature type="helix" evidence="13">
    <location>
        <begin position="492"/>
        <end position="494"/>
    </location>
</feature>
<feature type="turn" evidence="13">
    <location>
        <begin position="501"/>
        <end position="504"/>
    </location>
</feature>
<feature type="strand" evidence="13">
    <location>
        <begin position="507"/>
        <end position="510"/>
    </location>
</feature>
<feature type="strand" evidence="13">
    <location>
        <begin position="513"/>
        <end position="516"/>
    </location>
</feature>
<feature type="strand" evidence="13">
    <location>
        <begin position="524"/>
        <end position="526"/>
    </location>
</feature>
<feature type="strand" evidence="13">
    <location>
        <begin position="533"/>
        <end position="535"/>
    </location>
</feature>
<feature type="strand" evidence="12">
    <location>
        <begin position="536"/>
        <end position="539"/>
    </location>
</feature>
<feature type="strand" evidence="13">
    <location>
        <begin position="541"/>
        <end position="543"/>
    </location>
</feature>
<feature type="strand" evidence="13">
    <location>
        <begin position="549"/>
        <end position="551"/>
    </location>
</feature>
<feature type="helix" evidence="13">
    <location>
        <begin position="554"/>
        <end position="556"/>
    </location>
</feature>
<feature type="strand" evidence="13">
    <location>
        <begin position="557"/>
        <end position="559"/>
    </location>
</feature>
<feature type="helix" evidence="13">
    <location>
        <begin position="563"/>
        <end position="567"/>
    </location>
</feature>
<feature type="strand" evidence="13">
    <location>
        <begin position="576"/>
        <end position="580"/>
    </location>
</feature>
<feature type="strand" evidence="12">
    <location>
        <begin position="586"/>
        <end position="588"/>
    </location>
</feature>
<feature type="strand" evidence="13">
    <location>
        <begin position="592"/>
        <end position="598"/>
    </location>
</feature>
<feature type="strand" evidence="13">
    <location>
        <begin position="618"/>
        <end position="620"/>
    </location>
</feature>
<feature type="strand" evidence="13">
    <location>
        <begin position="635"/>
        <end position="641"/>
    </location>
</feature>
<feature type="strand" evidence="13">
    <location>
        <begin position="646"/>
        <end position="650"/>
    </location>
</feature>
<feature type="strand" evidence="13">
    <location>
        <begin position="672"/>
        <end position="688"/>
    </location>
</feature>
<feature type="strand" evidence="11">
    <location>
        <begin position="711"/>
        <end position="714"/>
    </location>
</feature>
<feature type="strand" evidence="13">
    <location>
        <begin position="731"/>
        <end position="733"/>
    </location>
</feature>
<evidence type="ECO:0000250" key="1"/>
<evidence type="ECO:0000256" key="2">
    <source>
        <dbReference type="SAM" id="MobiDB-lite"/>
    </source>
</evidence>
<evidence type="ECO:0000269" key="3">
    <source>
    </source>
</evidence>
<evidence type="ECO:0000269" key="4">
    <source>
    </source>
</evidence>
<evidence type="ECO:0000269" key="5">
    <source>
    </source>
</evidence>
<evidence type="ECO:0000269" key="6">
    <source>
    </source>
</evidence>
<evidence type="ECO:0000269" key="7">
    <source>
    </source>
</evidence>
<evidence type="ECO:0000269" key="8">
    <source>
    </source>
</evidence>
<evidence type="ECO:0000305" key="9"/>
<evidence type="ECO:0000305" key="10">
    <source>
    </source>
</evidence>
<evidence type="ECO:0007829" key="11">
    <source>
        <dbReference type="PDB" id="1LP3"/>
    </source>
</evidence>
<evidence type="ECO:0007829" key="12">
    <source>
        <dbReference type="PDB" id="6IH9"/>
    </source>
</evidence>
<evidence type="ECO:0007829" key="13">
    <source>
        <dbReference type="PDB" id="6NZ0"/>
    </source>
</evidence>
<comment type="function">
    <text evidence="3 4 5 8">Capsid protein self-assembles to form an icosahedral capsid with a T=1 symmetry, about 22 nm in diameter, and consisting of 60 copies of three size variants of the capsid protein VP1, VP2 and VP3 which differ in their N-terminus. The capsid encapsulates the genomic ssDNA. Binds to host cell heparan sulfate and uses host ITGA5-ITGB1 as coreceptor on the cell surface to provide virion attachment to target cell. This attachment induces virion internalization predominantly through clathrin-dependent endocytosis. Binding to the host receptor also induces capsid rearrangements leading to surface exposure of VP1 N-terminus, specifically its phospholipase A2-like region and putative nuclear localization signal(s). VP1 N-terminus might serve as a lipolytic enzyme to breach the endosomal membrane during entry into host cell and might contribute to virus transport to the nucleus.</text>
</comment>
<comment type="subcellular location">
    <subcellularLocation>
        <location evidence="9">Virion</location>
    </subcellularLocation>
    <subcellularLocation>
        <location evidence="7">Host nucleus</location>
        <location evidence="7">Host nucleolus</location>
    </subcellularLocation>
    <text>Capsid proteins are first observed in the host nucleolus where capsid assembly may occur, and then are present over the whole nucleoplasm where encapsidation of the viral DNA takes place.</text>
</comment>
<comment type="alternative products">
    <event type="alternative splicing"/>
    <event type="alternative initiation"/>
    <isoform>
        <id>P03135-1</id>
        <name>VP1</name>
        <sequence type="displayed"/>
    </isoform>
    <isoform>
        <id>P03135-2</id>
        <name>VP2</name>
        <sequence type="described" ref="VSP_040829 VSP_040830"/>
    </isoform>
    <isoform>
        <id>P03135-3</id>
        <name>VP3</name>
        <sequence type="described" ref="VSP_040828"/>
    </isoform>
</comment>
<comment type="domain">
    <text>The N-terminus of VP1 is sequestered within the mature capsid. It contains a phospholipase A2-like region and putative nuclear localization signals.</text>
</comment>
<comment type="biotechnology">
    <text evidence="10">AAV capsids serve as viral gene transfer vectors that have been shown to affect long-term gene expression and disease correction with low toxicity in animal models, and are well tolerated in human clinical trials.</text>
</comment>
<comment type="miscellaneous">
    <text evidence="10">The ratio at which VP1, VP2 and VP3 proteins are synthesized in vivo is about 1:1:10, which is the same as in the mature virus particle.</text>
</comment>
<comment type="miscellaneous">
    <molecule>Isoform VP1</molecule>
    <text evidence="6">Produced by alternative splicing (2.6 kb mRNA).</text>
</comment>
<comment type="miscellaneous">
    <molecule>Isoform VP2</molecule>
    <text evidence="6">Produced by alternative splicing (2.3 kb mRNA), with initiatory methionine encoded by an ACG codon.</text>
</comment>
<comment type="miscellaneous">
    <molecule>Isoform VP3</molecule>
    <text evidence="6">Produced by alternative initiation of the 2.3 kb mRNA.</text>
</comment>
<comment type="similarity">
    <text evidence="9">Belongs to the parvoviridae capsid protein family.</text>
</comment>
<comment type="sequence caution" evidence="9">
    <conflict type="frameshift">
        <sequence resource="EMBL-CDS" id="AAA42376"/>
    </conflict>
</comment>
<organism>
    <name type="scientific">Adeno-associated virus 2 (isolate Srivastava/1982)</name>
    <name type="common">AAV-2</name>
    <dbReference type="NCBI Taxonomy" id="648242"/>
    <lineage>
        <taxon>Viruses</taxon>
        <taxon>Monodnaviria</taxon>
        <taxon>Shotokuvirae</taxon>
        <taxon>Cossaviricota</taxon>
        <taxon>Quintoviricetes</taxon>
        <taxon>Piccovirales</taxon>
        <taxon>Parvoviridae</taxon>
        <taxon>Parvovirinae</taxon>
        <taxon>Dependoparvovirus</taxon>
        <taxon>Dependoparvovirus primate1</taxon>
    </lineage>
</organism>
<reference key="1">
    <citation type="journal article" date="1983" name="J. Virol.">
        <title>Nucleotide sequence and organization of the adeno-associated virus 2 genome.</title>
        <authorList>
            <person name="Srivastava A."/>
            <person name="Lusby E.W."/>
            <person name="Berns K.I."/>
        </authorList>
    </citation>
    <scope>NUCLEOTIDE SEQUENCE [GENOMIC DNA]</scope>
</reference>
<reference key="2">
    <citation type="journal article" date="1994" name="J. Gen. Virol.">
        <title>Mutations in the carboxy terminus of adeno-associated virus 2 capsid proteins affect viral infectivity: lack of an RGD integrin-binding motif.</title>
        <authorList>
            <person name="Ruffing M."/>
            <person name="Heid H."/>
            <person name="Kleinschmidt J.A."/>
        </authorList>
    </citation>
    <scope>NUCLEOTIDE SEQUENCE [GENOMIC DNA]</scope>
</reference>
<reference key="3">
    <citation type="submission" date="1998-01" db="EMBL/GenBank/DDBJ databases">
        <authorList>
            <person name="Berns K.I."/>
            <person name="Bohenzky R.A."/>
            <person name="Cassinotti P."/>
            <person name="Colvin D."/>
            <person name="Donahue B.A."/>
            <person name="Dull T."/>
            <person name="Horer M."/>
            <person name="Kleinschmidt J.A."/>
            <person name="Ruffing M."/>
            <person name="Snyder R.O."/>
            <person name="Tratschin J.-D."/>
            <person name="Weitz M."/>
        </authorList>
    </citation>
    <scope>NUCLEOTIDE SEQUENCE [GENOMIC DNA]</scope>
</reference>
<reference key="4">
    <citation type="journal article" date="1988" name="J. Virol.">
        <title>Synthesis of adeno-associated virus structural proteins requires both alternative mRNA splicing and alternative initiations from a single transcript.</title>
        <authorList>
            <person name="Becerra S.P."/>
            <person name="Koczot F."/>
            <person name="Fabisch P."/>
            <person name="Rose J.A."/>
        </authorList>
    </citation>
    <scope>ALTERNATIVE SPLICING</scope>
</reference>
<reference key="5">
    <citation type="journal article" date="1997" name="J. Virol.">
        <title>Subcellular compartmentalization of adeno-associated virus type 2 assembly.</title>
        <authorList>
            <person name="Wistuba A."/>
            <person name="Kern A."/>
            <person name="Weger S."/>
            <person name="Grimm D."/>
            <person name="Kleinschmidt J.A."/>
        </authorList>
    </citation>
    <scope>SUBCELLULAR LOCATION</scope>
</reference>
<reference key="6">
    <citation type="journal article" date="1998" name="J. Virol.">
        <title>Membrane-associated heparan sulfate proteoglycan is a receptor for adeno-associated virus type 2 virions.</title>
        <authorList>
            <person name="Summerford C."/>
            <person name="Samulski R.J."/>
        </authorList>
    </citation>
    <scope>FUNCTION</scope>
</reference>
<reference key="7">
    <citation type="journal article" date="2000" name="J. Virol.">
        <title>Infectious entry pathway of adeno-associated virus and adeno-associated virus vectors.</title>
        <authorList>
            <person name="Bartlett J.S."/>
            <person name="Wilcher R."/>
            <person name="Samulski R.J."/>
        </authorList>
    </citation>
    <scope>FUNCTION</scope>
</reference>
<reference key="8">
    <citation type="journal article" date="2002" name="J. Gen. Virol.">
        <title>The VP1 capsid protein of adeno-associated virus type 2 is carrying a phospholipase A2 domain required for virus infectivity.</title>
        <authorList>
            <person name="Girod A."/>
            <person name="Wobus C.E."/>
            <person name="Zadori Z."/>
            <person name="Ried M."/>
            <person name="Leike K."/>
            <person name="Tijssen P."/>
            <person name="Kleinschmidt J.A."/>
            <person name="Hallek M."/>
        </authorList>
    </citation>
    <scope>FUNCTION OF VP1</scope>
</reference>
<reference key="9">
    <citation type="journal article" date="2006" name="J. Virol.">
        <title>Adeno-associated virus type 2 contains an integrin alpha5beta1 binding domain essential for viral cell entry.</title>
        <authorList>
            <person name="Asokan A."/>
            <person name="Hamra J.B."/>
            <person name="Govindasamy L."/>
            <person name="Agbandje-McKenna M."/>
            <person name="Samulski R.J."/>
        </authorList>
    </citation>
    <scope>FUNCTION</scope>
</reference>
<reference key="10">
    <citation type="journal article" date="2008" name="Methods Mol. Biol.">
        <title>The role of the adeno-associated virus capsid in gene transfer.</title>
        <authorList>
            <person name="Van Vliet K.M."/>
            <person name="Blouin V."/>
            <person name="Brument N."/>
            <person name="Agbandje-McKenna M."/>
            <person name="Snyder R.O."/>
        </authorList>
    </citation>
    <scope>BIOTECHNOLOGY</scope>
</reference>
<reference key="11">
    <citation type="journal article" date="2002" name="Proc. Natl. Acad. Sci. U.S.A.">
        <title>The atomic structure of adeno-associated virus (AAV-2), a vector for human gene therapy.</title>
        <authorList>
            <person name="Xie Q."/>
            <person name="Bu W."/>
            <person name="Bhatia S."/>
            <person name="Hare J."/>
            <person name="Somasundaram T."/>
            <person name="Azzi A."/>
            <person name="Chapman M.S."/>
        </authorList>
    </citation>
    <scope>X-RAY CRYSTALLOGRAPHY (3.0 ANGSTROMS) OF 217-735</scope>
</reference>
<accession>P03135</accession>
<accession>O56652</accession>
<accession>O56653</accession>
<accession>O92917</accession>
<keyword id="KW-0002">3D-structure</keyword>
<keyword id="KW-0024">Alternative initiation</keyword>
<keyword id="KW-0025">Alternative splicing</keyword>
<keyword id="KW-0167">Capsid protein</keyword>
<keyword id="KW-1165">Clathrin-mediated endocytosis of virus by host</keyword>
<keyword id="KW-1048">Host nucleus</keyword>
<keyword id="KW-0945">Host-virus interaction</keyword>
<keyword id="KW-1185">Reference proteome</keyword>
<keyword id="KW-1140">T=1 icosahedral capsid protein</keyword>
<keyword id="KW-1161">Viral attachment to host cell</keyword>
<keyword id="KW-1162">Viral penetration into host cytoplasm</keyword>
<keyword id="KW-1173">Viral penetration via permeabilization of host membrane</keyword>
<keyword id="KW-0946">Virion</keyword>
<keyword id="KW-1164">Virus endocytosis by host</keyword>
<keyword id="KW-1160">Virus entry into host cell</keyword>
<proteinExistence type="evidence at protein level"/>
<dbReference type="EMBL" id="J01901">
    <property type="protein sequence ID" value="AAA42376.1"/>
    <property type="status" value="ALT_FRAME"/>
    <property type="molecule type" value="Genomic_DNA"/>
</dbReference>
<dbReference type="EMBL" id="AF043303">
    <property type="protein sequence ID" value="AAC03779.1"/>
    <property type="molecule type" value="Genomic_DNA"/>
</dbReference>
<dbReference type="EMBL" id="AF043303">
    <property type="protein sequence ID" value="AAC03780.1"/>
    <property type="molecule type" value="Genomic_DNA"/>
</dbReference>
<dbReference type="EMBL" id="AF043303">
    <property type="protein sequence ID" value="AAC03778.1"/>
    <property type="molecule type" value="Genomic_DNA"/>
</dbReference>
<dbReference type="PIR" id="A03698">
    <property type="entry name" value="VCPV3A"/>
</dbReference>
<dbReference type="RefSeq" id="YP_680426.1">
    <property type="nucleotide sequence ID" value="NC_001401.2"/>
</dbReference>
<dbReference type="RefSeq" id="YP_680427.1">
    <property type="nucleotide sequence ID" value="NC_001401.2"/>
</dbReference>
<dbReference type="RefSeq" id="YP_680428.1">
    <property type="nucleotide sequence ID" value="NC_001401.2"/>
</dbReference>
<dbReference type="PDB" id="1LP3">
    <property type="method" value="X-ray"/>
    <property type="resolution" value="3.00 A"/>
    <property type="chains" value="A=217-735"/>
</dbReference>
<dbReference type="PDB" id="3J1S">
    <property type="method" value="EM"/>
    <property type="resolution" value="8.50 A"/>
    <property type="chains" value="A=217-735"/>
</dbReference>
<dbReference type="PDB" id="3J4P">
    <property type="method" value="EM"/>
    <property type="resolution" value="4.80 A"/>
    <property type="chains" value="A=221-735"/>
</dbReference>
<dbReference type="PDB" id="5IPI">
    <property type="method" value="EM"/>
    <property type="resolution" value="3.80 A"/>
    <property type="chains" value="1/2/3/4/5/6/7/8/A/B/C/D/E/F/G/H/I/J/K/L/M/N/O/P/Q/R/S/T/U/V=1-735"/>
</dbReference>
<dbReference type="PDB" id="5IPK">
    <property type="method" value="EM"/>
    <property type="resolution" value="3.70 A"/>
    <property type="chains" value="1/2/3/4/5/6/7/8/A/B/C/D/E/F/G/H/I/J/K/L/M/N/O/P/Q/R/S/T/U/V=1-735"/>
</dbReference>
<dbReference type="PDB" id="6CBE">
    <property type="method" value="EM"/>
    <property type="resolution" value="2.78 A"/>
    <property type="chains" value="0/1/2/3/4/5/6/7/A/B/C/D/E/F/G/H/I/J/K/L/M/N/O/P/Q/R/S/T/U/V=1-735"/>
</dbReference>
<dbReference type="PDB" id="6E9D">
    <property type="method" value="EM"/>
    <property type="resolution" value="1.86 A"/>
    <property type="chains" value="1/2/3/4/5/6/7/8/A/B/C/D/E/F/G/H/I/J/K/L/M/N/O/P/Q/R/S/T/U/V=1-735"/>
</dbReference>
<dbReference type="PDB" id="6IH9">
    <property type="method" value="EM"/>
    <property type="resolution" value="2.80 A"/>
    <property type="chains" value="A=219-735"/>
</dbReference>
<dbReference type="PDB" id="6IHB">
    <property type="method" value="EM"/>
    <property type="resolution" value="2.84 A"/>
    <property type="chains" value="A=1-735"/>
</dbReference>
<dbReference type="PDB" id="6NZ0">
    <property type="method" value="EM"/>
    <property type="resolution" value="2.40 A"/>
    <property type="chains" value="A=1-735"/>
</dbReference>
<dbReference type="PDB" id="6U0R">
    <property type="method" value="EM"/>
    <property type="resolution" value="2.91 A"/>
    <property type="chains" value="1/2/3/4/5/6/7/8/A/B/C/D/E/F/G/H/I/J/K/L/M/N/O/P/Q/R/S/T/U/V=219-735"/>
</dbReference>
<dbReference type="PDB" id="6U0V">
    <property type="method" value="EM"/>
    <property type="resolution" value="3.02 A"/>
    <property type="chains" value="1/2/3/4/5/6/7/8/A/B/C/D/E/F/G/H/I/J/K/L/M/N/O/P/Q/R/S/T/U/V=214-735"/>
</dbReference>
<dbReference type="PDB" id="7RWL">
    <property type="method" value="EM"/>
    <property type="resolution" value="3.14 A"/>
    <property type="chains" value="1/2/3/4/5/6/7/8/A/B/C/D/E/F/G/H/I/J/K/L/M/N/O/P/Q/R/S/T/U/V=1-735"/>
</dbReference>
<dbReference type="PDB" id="7RWT">
    <property type="method" value="EM"/>
    <property type="resolution" value="2.43 A"/>
    <property type="chains" value="1/2/3/4/5/6/7/8/A/B/C/D/E/F/G/H/I/J/K/L/M/N/O/P/Q/R/S/T/U/V=1-735"/>
</dbReference>
<dbReference type="PDB" id="8FYW">
    <property type="method" value="EM"/>
    <property type="resolution" value="2.84 A"/>
    <property type="chains" value="1/2/3/4/5/6/7/8/A/B/C/D/E/F/G/H/I/J/K/L/M/N/O/P/Q/R/S/T/U/V=1-735"/>
</dbReference>
<dbReference type="PDB" id="8FZ0">
    <property type="method" value="EM"/>
    <property type="resolution" value="2.94 A"/>
    <property type="chains" value="1/2/3/4/5/6/7/8/A/B/C/D/E/F/G/H/I/J/K/L/M/N/O/P/Q/R/S/T/U/V=1-735"/>
</dbReference>
<dbReference type="PDB" id="8FZN">
    <property type="method" value="EM"/>
    <property type="resolution" value="3.62 A"/>
    <property type="chains" value="1/2/3/4/5/6/7/8/A/B/C/D/E/F/G/H/I/J/K/L/M/N/O/P/Q/R/S/T/U/V=236-735"/>
</dbReference>
<dbReference type="PDBsum" id="1LP3"/>
<dbReference type="PDBsum" id="3J1S"/>
<dbReference type="PDBsum" id="3J4P"/>
<dbReference type="PDBsum" id="5IPI"/>
<dbReference type="PDBsum" id="5IPK"/>
<dbReference type="PDBsum" id="6CBE"/>
<dbReference type="PDBsum" id="6E9D"/>
<dbReference type="PDBsum" id="6IH9"/>
<dbReference type="PDBsum" id="6IHB"/>
<dbReference type="PDBsum" id="6NZ0"/>
<dbReference type="PDBsum" id="6U0R"/>
<dbReference type="PDBsum" id="6U0V"/>
<dbReference type="PDBsum" id="7RWL"/>
<dbReference type="PDBsum" id="7RWT"/>
<dbReference type="PDBsum" id="8FYW"/>
<dbReference type="PDBsum" id="8FZ0"/>
<dbReference type="PDBsum" id="8FZN"/>
<dbReference type="EMDB" id="EMD-0553"/>
<dbReference type="EMDB" id="EMD-20609"/>
<dbReference type="EMDB" id="EMD-20610"/>
<dbReference type="EMDB" id="EMD-24718"/>
<dbReference type="EMDB" id="EMD-24719"/>
<dbReference type="EMDB" id="EMD-29598"/>
<dbReference type="EMDB" id="EMD-29600"/>
<dbReference type="EMDB" id="EMD-29636"/>
<dbReference type="EMDB" id="EMD-7452"/>
<dbReference type="EMDB" id="EMD-8099"/>
<dbReference type="EMDB" id="EMD-8100"/>
<dbReference type="EMDB" id="EMD-9012"/>
<dbReference type="EMDB" id="EMD-9671"/>
<dbReference type="EMDB" id="EMD-9672"/>
<dbReference type="SMR" id="P03135"/>
<dbReference type="DIP" id="DIP-46114N"/>
<dbReference type="ELM" id="P03135"/>
<dbReference type="ABCD" id="P03135">
    <property type="antibodies" value="1 sequenced antibody"/>
</dbReference>
<dbReference type="DNASU" id="4192015"/>
<dbReference type="KEGG" id="vg:4192015"/>
<dbReference type="KEGG" id="vg:4192016"/>
<dbReference type="KEGG" id="vg:4192017"/>
<dbReference type="BRENDA" id="3.1.1.4">
    <property type="organism ID" value="11447"/>
</dbReference>
<dbReference type="EvolutionaryTrace" id="P03135"/>
<dbReference type="Proteomes" id="UP000008469">
    <property type="component" value="Genome"/>
</dbReference>
<dbReference type="Proteomes" id="UP000180764">
    <property type="component" value="Segment"/>
</dbReference>
<dbReference type="GO" id="GO:0044196">
    <property type="term" value="C:host cell nucleolus"/>
    <property type="evidence" value="ECO:0007669"/>
    <property type="project" value="UniProtKB-SubCell"/>
</dbReference>
<dbReference type="GO" id="GO:0039615">
    <property type="term" value="C:T=1 icosahedral viral capsid"/>
    <property type="evidence" value="ECO:0007669"/>
    <property type="project" value="UniProtKB-KW"/>
</dbReference>
<dbReference type="GO" id="GO:0005198">
    <property type="term" value="F:structural molecule activity"/>
    <property type="evidence" value="ECO:0007669"/>
    <property type="project" value="InterPro"/>
</dbReference>
<dbReference type="GO" id="GO:0075512">
    <property type="term" value="P:clathrin-dependent endocytosis of virus by host cell"/>
    <property type="evidence" value="ECO:0007669"/>
    <property type="project" value="UniProtKB-KW"/>
</dbReference>
<dbReference type="GO" id="GO:0140267">
    <property type="term" value="P:symbiont entry into host cell via permeabilization of host membrane"/>
    <property type="evidence" value="ECO:0007669"/>
    <property type="project" value="UniProtKB-KW"/>
</dbReference>
<dbReference type="GO" id="GO:0019062">
    <property type="term" value="P:virion attachment to host cell"/>
    <property type="evidence" value="ECO:0007669"/>
    <property type="project" value="UniProtKB-KW"/>
</dbReference>
<dbReference type="Gene3D" id="2.170.30.10">
    <property type="entry name" value="Parvovirus coat protein VP1/VP2"/>
    <property type="match status" value="1"/>
</dbReference>
<dbReference type="InterPro" id="IPR016184">
    <property type="entry name" value="Capsid/spike_ssDNA_virus"/>
</dbReference>
<dbReference type="InterPro" id="IPR001403">
    <property type="entry name" value="Parvovirus_coat"/>
</dbReference>
<dbReference type="InterPro" id="IPR013607">
    <property type="entry name" value="Phospholipase_A2-like"/>
</dbReference>
<dbReference type="InterPro" id="IPR036952">
    <property type="entry name" value="VP1/VP2"/>
</dbReference>
<dbReference type="Pfam" id="PF00740">
    <property type="entry name" value="Parvo_coat"/>
    <property type="match status" value="1"/>
</dbReference>
<dbReference type="Pfam" id="PF08398">
    <property type="entry name" value="Phospholip_A2_4"/>
    <property type="match status" value="1"/>
</dbReference>
<dbReference type="SUPFAM" id="SSF88645">
    <property type="entry name" value="ssDNA viruses"/>
    <property type="match status" value="1"/>
</dbReference>
<sequence length="735" mass="81945">MAADGYLPDWLEDTLSEGIRQWWKLKPGPPPPKPAERHKDDSRGLVLPGYKYLGPFNGLDKGEPVNEADAAALEHDKAYDRQLDSGDNPYLKYNHADAEFQERLKEDTSFGGNLGRAVFQAKKRVLEPLGLVEEPVKTAPGKKRPVEHSPVEPDSSSGTGKAGQQPARKRLNFGQTGDADSVPDPQPLGQPPAAPSGLGTNTMATGSGAPMADNNEGADGVGNSSGNWHCDSTWMGDRVITTSTRTWALPTYNNHLYKQISSQSGASNDNHYFGYSTPWGYFDFNRFHCHFSPRDWQRLINNNWGFRPKRLNFKLFNIQVKEVTQNDGTTTIANNLTSTVQVFTDSEYQLPYVLGSAHQGCLPPFPADVFMVPQYGYLTLNNGSQAVGRSSFYCLEYFPSQMLRTGNNFTFSYTFEDVPFHSSYAHSQSLDRLMNPLIDQYLYYLSRTNTPSGTTTQSRLQFSQAGASDIRDQSRNWLPGPCYRQQRVSKTSADNNNSEYSWTGATKYHLNGRDSLVNPGPAMASHKDDEEKFFPQSGVLIFGKQGSEKTNVDIEKVMITDEEEIRTTNPVATEQYGSVSTNLQRGNRQAATADVNTQGVLPGMVWQDRDVYLQGPIWAKIPHTDGHFHPSPLMGGFGLKHPPPQILIKNTPVPANPSTTFSAAKFASFITQYSTGQVSVEIEWELQKENSKRWNPEIQYTSNYNKSVNVDFTVDTNGVYSEPRPIGTRYLTRNL</sequence>
<organismHost>
    <name type="scientific">Mammalia</name>
    <dbReference type="NCBI Taxonomy" id="40674"/>
</organismHost>
<gene>
    <name type="primary">VP1</name>
</gene>